<feature type="signal peptide" evidence="5">
    <location>
        <begin position="1"/>
        <end position="24"/>
    </location>
</feature>
<feature type="chain" id="PRO_0000041440" description="Protein Wnt-6">
    <location>
        <begin position="25"/>
        <end position="365"/>
    </location>
</feature>
<feature type="region of interest" description="Disordered" evidence="6">
    <location>
        <begin position="140"/>
        <end position="164"/>
    </location>
</feature>
<feature type="compositionally biased region" description="Pro residues" evidence="6">
    <location>
        <begin position="140"/>
        <end position="158"/>
    </location>
</feature>
<feature type="lipid moiety-binding region" description="O-palmitoleoyl serine; by PORCN" evidence="4">
    <location>
        <position position="228"/>
    </location>
</feature>
<feature type="glycosylation site" description="N-linked (GlcNAc...) asparagine" evidence="5">
    <location>
        <position position="86"/>
    </location>
</feature>
<feature type="glycosylation site" description="N-linked (GlcNAc...) asparagine" evidence="5">
    <location>
        <position position="311"/>
    </location>
</feature>
<feature type="disulfide bond" evidence="3">
    <location>
        <begin position="76"/>
        <end position="87"/>
    </location>
</feature>
<feature type="disulfide bond" evidence="3">
    <location>
        <begin position="124"/>
        <end position="132"/>
    </location>
</feature>
<feature type="disulfide bond" evidence="3">
    <location>
        <begin position="134"/>
        <end position="172"/>
    </location>
</feature>
<feature type="disulfide bond" evidence="3">
    <location>
        <begin position="222"/>
        <end position="236"/>
    </location>
</feature>
<feature type="disulfide bond" evidence="3">
    <location>
        <begin position="224"/>
        <end position="231"/>
    </location>
</feature>
<feature type="disulfide bond" evidence="3">
    <location>
        <begin position="294"/>
        <end position="325"/>
    </location>
</feature>
<feature type="disulfide bond" evidence="3">
    <location>
        <begin position="310"/>
        <end position="320"/>
    </location>
</feature>
<feature type="disulfide bond" evidence="3">
    <location>
        <begin position="324"/>
        <end position="364"/>
    </location>
</feature>
<feature type="disulfide bond" evidence="3">
    <location>
        <begin position="340"/>
        <end position="355"/>
    </location>
</feature>
<feature type="disulfide bond" evidence="3">
    <location>
        <begin position="342"/>
        <end position="352"/>
    </location>
</feature>
<feature type="disulfide bond" evidence="3">
    <location>
        <begin position="347"/>
        <end position="348"/>
    </location>
</feature>
<evidence type="ECO:0000250" key="1"/>
<evidence type="ECO:0000250" key="2">
    <source>
        <dbReference type="UniProtKB" id="P27467"/>
    </source>
</evidence>
<evidence type="ECO:0000250" key="3">
    <source>
        <dbReference type="UniProtKB" id="P28026"/>
    </source>
</evidence>
<evidence type="ECO:0000250" key="4">
    <source>
        <dbReference type="UniProtKB" id="P56704"/>
    </source>
</evidence>
<evidence type="ECO:0000255" key="5"/>
<evidence type="ECO:0000256" key="6">
    <source>
        <dbReference type="SAM" id="MobiDB-lite"/>
    </source>
</evidence>
<evidence type="ECO:0000269" key="7">
    <source>
    </source>
</evidence>
<evidence type="ECO:0000305" key="8"/>
<organism>
    <name type="scientific">Homo sapiens</name>
    <name type="common">Human</name>
    <dbReference type="NCBI Taxonomy" id="9606"/>
    <lineage>
        <taxon>Eukaryota</taxon>
        <taxon>Metazoa</taxon>
        <taxon>Chordata</taxon>
        <taxon>Craniata</taxon>
        <taxon>Vertebrata</taxon>
        <taxon>Euteleostomi</taxon>
        <taxon>Mammalia</taxon>
        <taxon>Eutheria</taxon>
        <taxon>Euarchontoglires</taxon>
        <taxon>Primates</taxon>
        <taxon>Haplorrhini</taxon>
        <taxon>Catarrhini</taxon>
        <taxon>Hominidae</taxon>
        <taxon>Homo</taxon>
    </lineage>
</organism>
<gene>
    <name type="primary">WNT6</name>
</gene>
<proteinExistence type="evidence at protein level"/>
<keyword id="KW-0217">Developmental protein</keyword>
<keyword id="KW-1015">Disulfide bond</keyword>
<keyword id="KW-0272">Extracellular matrix</keyword>
<keyword id="KW-0325">Glycoprotein</keyword>
<keyword id="KW-0449">Lipoprotein</keyword>
<keyword id="KW-1267">Proteomics identification</keyword>
<keyword id="KW-1185">Reference proteome</keyword>
<keyword id="KW-0964">Secreted</keyword>
<keyword id="KW-0732">Signal</keyword>
<keyword id="KW-0879">Wnt signaling pathway</keyword>
<protein>
    <recommendedName>
        <fullName>Protein Wnt-6</fullName>
    </recommendedName>
</protein>
<name>WNT6_HUMAN</name>
<comment type="function">
    <text evidence="7">Ligand for members of the frizzled family of seven transmembrane receptors. Probable developmental protein. May be a signaling molecule which affects the development of discrete regions of tissues. Is likely to signal over only few cell diameters. Together with CAV1 may promote chemoresistance of gastric cancer cells to DNA-damaging anthracycline drugs through the activation of the canonical Wnt receptor signaling pathway.</text>
</comment>
<comment type="subunit">
    <text evidence="1">Interacts with PORCN.</text>
</comment>
<comment type="subcellular location">
    <subcellularLocation>
        <location>Secreted</location>
        <location>Extracellular space</location>
        <location>Extracellular matrix</location>
    </subcellularLocation>
</comment>
<comment type="tissue specificity">
    <text evidence="7">Expressed in gastric cancer cell lines and gastric cancer tissues (at protein level). Detected in the apical gland region of the gastric foveolar epithelium (at protein level).</text>
</comment>
<comment type="PTM">
    <text evidence="2 4">Palmitoleoylation is required for efficient binding to frizzled receptors. Depalmitoleoylation leads to Wnt signaling pathway inhibition.</text>
</comment>
<comment type="similarity">
    <text evidence="8">Belongs to the Wnt family.</text>
</comment>
<dbReference type="EMBL" id="AY009401">
    <property type="protein sequence ID" value="AAG38661.1"/>
    <property type="molecule type" value="mRNA"/>
</dbReference>
<dbReference type="EMBL" id="AB059570">
    <property type="protein sequence ID" value="BAB55603.1"/>
    <property type="molecule type" value="mRNA"/>
</dbReference>
<dbReference type="EMBL" id="BT007456">
    <property type="protein sequence ID" value="AAP36124.1"/>
    <property type="molecule type" value="mRNA"/>
</dbReference>
<dbReference type="EMBL" id="BC004329">
    <property type="protein sequence ID" value="AAH04329.1"/>
    <property type="molecule type" value="mRNA"/>
</dbReference>
<dbReference type="EMBL" id="AF315943">
    <property type="protein sequence ID" value="AAG45154.1"/>
    <property type="molecule type" value="Genomic_DNA"/>
</dbReference>
<dbReference type="EMBL" id="AF079522">
    <property type="protein sequence ID" value="AAD41674.1"/>
    <property type="molecule type" value="Genomic_DNA"/>
</dbReference>
<dbReference type="CCDS" id="CCDS2425.1"/>
<dbReference type="PIR" id="JC7694">
    <property type="entry name" value="JC7694"/>
</dbReference>
<dbReference type="RefSeq" id="NP_006513.1">
    <property type="nucleotide sequence ID" value="NM_006522.4"/>
</dbReference>
<dbReference type="SMR" id="Q9Y6F9"/>
<dbReference type="BioGRID" id="113312">
    <property type="interactions" value="12"/>
</dbReference>
<dbReference type="FunCoup" id="Q9Y6F9">
    <property type="interactions" value="507"/>
</dbReference>
<dbReference type="IntAct" id="Q9Y6F9">
    <property type="interactions" value="5"/>
</dbReference>
<dbReference type="STRING" id="9606.ENSP00000233948"/>
<dbReference type="GlyCosmos" id="Q9Y6F9">
    <property type="glycosylation" value="2 sites, No reported glycans"/>
</dbReference>
<dbReference type="GlyGen" id="Q9Y6F9">
    <property type="glycosylation" value="3 sites, 1 N-linked glycan (1 site)"/>
</dbReference>
<dbReference type="iPTMnet" id="Q9Y6F9"/>
<dbReference type="PhosphoSitePlus" id="Q9Y6F9"/>
<dbReference type="BioMuta" id="WNT6"/>
<dbReference type="DMDM" id="14424016"/>
<dbReference type="MassIVE" id="Q9Y6F9"/>
<dbReference type="PaxDb" id="9606-ENSP00000233948"/>
<dbReference type="PeptideAtlas" id="Q9Y6F9"/>
<dbReference type="ProteomicsDB" id="86672"/>
<dbReference type="Antibodypedia" id="34291">
    <property type="antibodies" value="242 antibodies from 34 providers"/>
</dbReference>
<dbReference type="DNASU" id="7475"/>
<dbReference type="Ensembl" id="ENST00000233948.4">
    <property type="protein sequence ID" value="ENSP00000233948.3"/>
    <property type="gene ID" value="ENSG00000115596.4"/>
</dbReference>
<dbReference type="GeneID" id="7475"/>
<dbReference type="KEGG" id="hsa:7475"/>
<dbReference type="MANE-Select" id="ENST00000233948.4">
    <property type="protein sequence ID" value="ENSP00000233948.3"/>
    <property type="RefSeq nucleotide sequence ID" value="NM_006522.4"/>
    <property type="RefSeq protein sequence ID" value="NP_006513.1"/>
</dbReference>
<dbReference type="UCSC" id="uc002vjc.2">
    <property type="organism name" value="human"/>
</dbReference>
<dbReference type="AGR" id="HGNC:12785"/>
<dbReference type="CTD" id="7475"/>
<dbReference type="DisGeNET" id="7475"/>
<dbReference type="GeneCards" id="WNT6"/>
<dbReference type="HGNC" id="HGNC:12785">
    <property type="gene designation" value="WNT6"/>
</dbReference>
<dbReference type="HPA" id="ENSG00000115596">
    <property type="expression patterns" value="Tissue enhanced (brain)"/>
</dbReference>
<dbReference type="MalaCards" id="WNT6"/>
<dbReference type="MIM" id="604663">
    <property type="type" value="gene"/>
</dbReference>
<dbReference type="neXtProt" id="NX_Q9Y6F9"/>
<dbReference type="OpenTargets" id="ENSG00000115596"/>
<dbReference type="PharmGKB" id="PA37386"/>
<dbReference type="VEuPathDB" id="HostDB:ENSG00000115596"/>
<dbReference type="eggNOG" id="KOG3913">
    <property type="taxonomic scope" value="Eukaryota"/>
</dbReference>
<dbReference type="GeneTree" id="ENSGT00940000159281"/>
<dbReference type="HOGENOM" id="CLU_033039_1_3_1"/>
<dbReference type="InParanoid" id="Q9Y6F9"/>
<dbReference type="OMA" id="EWTNCNC"/>
<dbReference type="OrthoDB" id="5945655at2759"/>
<dbReference type="PAN-GO" id="Q9Y6F9">
    <property type="GO annotations" value="6 GO annotations based on evolutionary models"/>
</dbReference>
<dbReference type="PhylomeDB" id="Q9Y6F9"/>
<dbReference type="TreeFam" id="TF105310"/>
<dbReference type="PathwayCommons" id="Q9Y6F9"/>
<dbReference type="Reactome" id="R-HSA-3238698">
    <property type="pathway name" value="WNT ligand biogenesis and trafficking"/>
</dbReference>
<dbReference type="Reactome" id="R-HSA-373080">
    <property type="pathway name" value="Class B/2 (Secretin family receptors)"/>
</dbReference>
<dbReference type="SignaLink" id="Q9Y6F9"/>
<dbReference type="SIGNOR" id="Q9Y6F9"/>
<dbReference type="BioGRID-ORCS" id="7475">
    <property type="hits" value="50 hits in 1146 CRISPR screens"/>
</dbReference>
<dbReference type="ChiTaRS" id="WNT6">
    <property type="organism name" value="human"/>
</dbReference>
<dbReference type="GenomeRNAi" id="7475"/>
<dbReference type="Pharos" id="Q9Y6F9">
    <property type="development level" value="Tbio"/>
</dbReference>
<dbReference type="PRO" id="PR:Q9Y6F9"/>
<dbReference type="Proteomes" id="UP000005640">
    <property type="component" value="Chromosome 2"/>
</dbReference>
<dbReference type="RNAct" id="Q9Y6F9">
    <property type="molecule type" value="protein"/>
</dbReference>
<dbReference type="Bgee" id="ENSG00000115596">
    <property type="expression patterns" value="Expressed in endometrium epithelium and 99 other cell types or tissues"/>
</dbReference>
<dbReference type="GO" id="GO:0009986">
    <property type="term" value="C:cell surface"/>
    <property type="evidence" value="ECO:0007669"/>
    <property type="project" value="Ensembl"/>
</dbReference>
<dbReference type="GO" id="GO:0030666">
    <property type="term" value="C:endocytic vesicle membrane"/>
    <property type="evidence" value="ECO:0000304"/>
    <property type="project" value="Reactome"/>
</dbReference>
<dbReference type="GO" id="GO:0005788">
    <property type="term" value="C:endoplasmic reticulum lumen"/>
    <property type="evidence" value="ECO:0000304"/>
    <property type="project" value="Reactome"/>
</dbReference>
<dbReference type="GO" id="GO:0070062">
    <property type="term" value="C:extracellular exosome"/>
    <property type="evidence" value="ECO:0000304"/>
    <property type="project" value="Reactome"/>
</dbReference>
<dbReference type="GO" id="GO:0031012">
    <property type="term" value="C:extracellular matrix"/>
    <property type="evidence" value="ECO:0007669"/>
    <property type="project" value="Ensembl"/>
</dbReference>
<dbReference type="GO" id="GO:0005576">
    <property type="term" value="C:extracellular region"/>
    <property type="evidence" value="ECO:0000304"/>
    <property type="project" value="Reactome"/>
</dbReference>
<dbReference type="GO" id="GO:0005615">
    <property type="term" value="C:extracellular space"/>
    <property type="evidence" value="ECO:0000318"/>
    <property type="project" value="GO_Central"/>
</dbReference>
<dbReference type="GO" id="GO:0005796">
    <property type="term" value="C:Golgi lumen"/>
    <property type="evidence" value="ECO:0000304"/>
    <property type="project" value="Reactome"/>
</dbReference>
<dbReference type="GO" id="GO:0005886">
    <property type="term" value="C:plasma membrane"/>
    <property type="evidence" value="ECO:0000304"/>
    <property type="project" value="Reactome"/>
</dbReference>
<dbReference type="GO" id="GO:0005125">
    <property type="term" value="F:cytokine activity"/>
    <property type="evidence" value="ECO:0000318"/>
    <property type="project" value="GO_Central"/>
</dbReference>
<dbReference type="GO" id="GO:0005109">
    <property type="term" value="F:frizzled binding"/>
    <property type="evidence" value="ECO:0000318"/>
    <property type="project" value="GO_Central"/>
</dbReference>
<dbReference type="GO" id="GO:0009798">
    <property type="term" value="P:axis specification"/>
    <property type="evidence" value="ECO:0007669"/>
    <property type="project" value="Ensembl"/>
</dbReference>
<dbReference type="GO" id="GO:0001658">
    <property type="term" value="P:branching involved in ureteric bud morphogenesis"/>
    <property type="evidence" value="ECO:0007669"/>
    <property type="project" value="Ensembl"/>
</dbReference>
<dbReference type="GO" id="GO:0060070">
    <property type="term" value="P:canonical Wnt signaling pathway"/>
    <property type="evidence" value="ECO:0000318"/>
    <property type="project" value="GO_Central"/>
</dbReference>
<dbReference type="GO" id="GO:0045165">
    <property type="term" value="P:cell fate commitment"/>
    <property type="evidence" value="ECO:0000318"/>
    <property type="project" value="GO_Central"/>
</dbReference>
<dbReference type="GO" id="GO:0071300">
    <property type="term" value="P:cellular response to retinoic acid"/>
    <property type="evidence" value="ECO:0000250"/>
    <property type="project" value="UniProtKB"/>
</dbReference>
<dbReference type="GO" id="GO:0061303">
    <property type="term" value="P:cornea development in camera-type eye"/>
    <property type="evidence" value="ECO:0000250"/>
    <property type="project" value="BHF-UCL"/>
</dbReference>
<dbReference type="GO" id="GO:0060684">
    <property type="term" value="P:epithelial-mesenchymal cell signaling"/>
    <property type="evidence" value="ECO:0007669"/>
    <property type="project" value="Ensembl"/>
</dbReference>
<dbReference type="GO" id="GO:0072079">
    <property type="term" value="P:nephron tubule formation"/>
    <property type="evidence" value="ECO:0007669"/>
    <property type="project" value="Ensembl"/>
</dbReference>
<dbReference type="GO" id="GO:0030182">
    <property type="term" value="P:neuron differentiation"/>
    <property type="evidence" value="ECO:0000250"/>
    <property type="project" value="UniProtKB"/>
</dbReference>
<dbReference type="GO" id="GO:0042475">
    <property type="term" value="P:odontogenesis of dentin-containing tooth"/>
    <property type="evidence" value="ECO:0000315"/>
    <property type="project" value="BHF-UCL"/>
</dbReference>
<dbReference type="GO" id="GO:0045893">
    <property type="term" value="P:positive regulation of DNA-templated transcription"/>
    <property type="evidence" value="ECO:0007669"/>
    <property type="project" value="Ensembl"/>
</dbReference>
<dbReference type="GO" id="GO:0010628">
    <property type="term" value="P:positive regulation of gene expression"/>
    <property type="evidence" value="ECO:0000315"/>
    <property type="project" value="BHF-UCL"/>
</dbReference>
<dbReference type="GO" id="GO:0070172">
    <property type="term" value="P:positive regulation of tooth mineralization"/>
    <property type="evidence" value="ECO:0000315"/>
    <property type="project" value="BHF-UCL"/>
</dbReference>
<dbReference type="CDD" id="cd19338">
    <property type="entry name" value="Wnt_Wnt6"/>
    <property type="match status" value="1"/>
</dbReference>
<dbReference type="FunFam" id="3.30.2460.20:FF:000001">
    <property type="entry name" value="Wnt homolog"/>
    <property type="match status" value="1"/>
</dbReference>
<dbReference type="Gene3D" id="3.30.2460.20">
    <property type="match status" value="1"/>
</dbReference>
<dbReference type="InterPro" id="IPR005817">
    <property type="entry name" value="Wnt"/>
</dbReference>
<dbReference type="InterPro" id="IPR009143">
    <property type="entry name" value="Wnt6"/>
</dbReference>
<dbReference type="InterPro" id="IPR043158">
    <property type="entry name" value="Wnt_C"/>
</dbReference>
<dbReference type="InterPro" id="IPR018161">
    <property type="entry name" value="Wnt_CS"/>
</dbReference>
<dbReference type="PANTHER" id="PTHR12027:SF72">
    <property type="entry name" value="PROTEIN WNT-6"/>
    <property type="match status" value="1"/>
</dbReference>
<dbReference type="PANTHER" id="PTHR12027">
    <property type="entry name" value="WNT RELATED"/>
    <property type="match status" value="1"/>
</dbReference>
<dbReference type="Pfam" id="PF00110">
    <property type="entry name" value="wnt"/>
    <property type="match status" value="1"/>
</dbReference>
<dbReference type="PRINTS" id="PR01845">
    <property type="entry name" value="WNT6PROTEIN"/>
</dbReference>
<dbReference type="PRINTS" id="PR01349">
    <property type="entry name" value="WNTPROTEIN"/>
</dbReference>
<dbReference type="SMART" id="SM00097">
    <property type="entry name" value="WNT1"/>
    <property type="match status" value="1"/>
</dbReference>
<dbReference type="PROSITE" id="PS00246">
    <property type="entry name" value="WNT1"/>
    <property type="match status" value="1"/>
</dbReference>
<sequence>MLPPLPSRLGLLLLLLLCPAHVGGLWWAVGSPLVMDPTSICRKARRLAGRQAELCQAEPEVVAELARGARLGVRECQFQFRFRRWNCSSHSKAFGRILQQDIRETAFVFAITAAGASHAVTQACSMGELLQCGCQAPRGRAPPRPSGLPGTPGPPGPAGSPEGSAAWEWGGCGDDVDFGDEKSRLFMDARHKRGRGDIRALVQLHNNEAGRLAVRSHTRTECKCHGLSGSCALRTCWQKLPPFREVGARLLERFHGASRVMGTNDGKALLPAVRTLKPPGRADLLYAADSPDFCAPNRRTGSPGTRGRACNSSAPDLSGCDLLCCGRGHRQESVQLEENCLCRFHWCCVVQCHRCRVRKELSLCL</sequence>
<reference key="1">
    <citation type="submission" date="2000-08" db="EMBL/GenBank/DDBJ databases">
        <title>Molecular cloning and characterization of six novel human WNT genes.</title>
        <authorList>
            <person name="Testa T.T."/>
            <person name="Mossakowska D.E."/>
            <person name="Carter P.S."/>
            <person name="Hu E."/>
            <person name="Zhu Y."/>
            <person name="Kelsell D.P."/>
            <person name="Murdock P.R."/>
            <person name="Herrity N.C."/>
            <person name="Lewis C.J."/>
            <person name="Cross D.A."/>
            <person name="Culbert A.A."/>
            <person name="Reith A.D."/>
            <person name="Barnes M.R."/>
        </authorList>
    </citation>
    <scope>NUCLEOTIDE SEQUENCE [MRNA]</scope>
</reference>
<reference key="2">
    <citation type="journal article" date="2001" name="Biochem. Biophys. Res. Commun.">
        <title>WNT10A and WNT6, clustered in human chromosome 2q35 region with head-to-tail manner, are strongly co-expressed in SW480 cells.</title>
        <authorList>
            <person name="Kirikoshi H."/>
            <person name="Sekihara H."/>
            <person name="Katoh M."/>
        </authorList>
    </citation>
    <scope>NUCLEOTIDE SEQUENCE [MRNA]</scope>
</reference>
<reference key="3">
    <citation type="submission" date="2003-05" db="EMBL/GenBank/DDBJ databases">
        <title>Cloning of human full-length CDSs in BD Creator(TM) system donor vector.</title>
        <authorList>
            <person name="Kalnine N."/>
            <person name="Chen X."/>
            <person name="Rolfs A."/>
            <person name="Halleck A."/>
            <person name="Hines L."/>
            <person name="Eisenstein S."/>
            <person name="Koundinya M."/>
            <person name="Raphael J."/>
            <person name="Moreira D."/>
            <person name="Kelley T."/>
            <person name="LaBaer J."/>
            <person name="Lin Y."/>
            <person name="Phelan M."/>
            <person name="Farmer A."/>
        </authorList>
    </citation>
    <scope>NUCLEOTIDE SEQUENCE [LARGE SCALE MRNA]</scope>
</reference>
<reference key="4">
    <citation type="journal article" date="2004" name="Genome Res.">
        <title>The status, quality, and expansion of the NIH full-length cDNA project: the Mammalian Gene Collection (MGC).</title>
        <authorList>
            <consortium name="The MGC Project Team"/>
        </authorList>
    </citation>
    <scope>NUCLEOTIDE SEQUENCE [LARGE SCALE MRNA]</scope>
    <source>
        <tissue>Placenta</tissue>
    </source>
</reference>
<reference key="5">
    <citation type="submission" date="2000-10" db="EMBL/GenBank/DDBJ databases">
        <title>Genomic sequence of the Wnt6 gene and the Wnt10a gene from human 2q35.</title>
        <authorList>
            <person name="Rump A."/>
            <person name="Hayes C."/>
            <person name="Brown S.D.M."/>
            <person name="Rosenthal A."/>
        </authorList>
    </citation>
    <scope>NUCLEOTIDE SEQUENCE [GENOMIC DNA] OF 28-365</scope>
</reference>
<reference key="6">
    <citation type="journal article" date="1999" name="Cytogenet. Cell Genet.">
        <title>Partial cloning and assignment of WNT6 to human chromosome band 2q35 by in situ hybridization.</title>
        <authorList>
            <person name="Rankin J."/>
            <person name="Strachan T."/>
            <person name="Lako M."/>
            <person name="Lindsay S."/>
        </authorList>
    </citation>
    <scope>NUCLEOTIDE SEQUENCE [GENOMIC DNA] OF 295-337</scope>
</reference>
<reference key="7">
    <citation type="journal article" date="2013" name="Oncogene">
        <title>WNT6 is a novel target gene of caveolin-1 promoting chemoresistance to epirubicin in human gastric cancer cells.</title>
        <authorList>
            <person name="Yuan G."/>
            <person name="Regel I."/>
            <person name="Lian F."/>
            <person name="Friedrich T."/>
            <person name="Hitkova I."/>
            <person name="Hofheinz R.D."/>
            <person name="Stroebel P."/>
            <person name="Langer R."/>
            <person name="Keller G."/>
            <person name="Roecken C."/>
            <person name="Zimmermann W."/>
            <person name="Schmid R.M."/>
            <person name="Ebert M.P.A."/>
            <person name="Burgermeister E."/>
        </authorList>
    </citation>
    <scope>FUNCTION</scope>
    <scope>TISSUE SPECIFICITY</scope>
</reference>
<accession>Q9Y6F9</accession>
<accession>Q9H1J6</accession>
<accession>Q9H238</accession>